<gene>
    <name type="primary">HTA2</name>
    <name type="ordered locus">CAALFM_C104170CA</name>
    <name type="ORF">CaO19.1051</name>
    <name type="ORF">CaO19.8653</name>
</gene>
<sequence>MSGGKGKAGSSEKASTSRSAKAGLTFPVGRVHRLLRKGNYAQRIGSGAPVYLTSVLEYLAAEILELAGNAARDNKKSRIIPRHLQLAIRNDEELNKLLGDVTIAQGGVLPNIHQSLLPAKKAKAGAASQEL</sequence>
<evidence type="ECO:0000250" key="1"/>
<evidence type="ECO:0000256" key="2">
    <source>
        <dbReference type="SAM" id="MobiDB-lite"/>
    </source>
</evidence>
<evidence type="ECO:0000305" key="3"/>
<organism>
    <name type="scientific">Candida albicans (strain SC5314 / ATCC MYA-2876)</name>
    <name type="common">Yeast</name>
    <dbReference type="NCBI Taxonomy" id="237561"/>
    <lineage>
        <taxon>Eukaryota</taxon>
        <taxon>Fungi</taxon>
        <taxon>Dikarya</taxon>
        <taxon>Ascomycota</taxon>
        <taxon>Saccharomycotina</taxon>
        <taxon>Pichiomycetes</taxon>
        <taxon>Debaryomycetaceae</taxon>
        <taxon>Candida/Lodderomyces clade</taxon>
        <taxon>Candida</taxon>
    </lineage>
</organism>
<name>H2A2_CANAL</name>
<keyword id="KW-0007">Acetylation</keyword>
<keyword id="KW-0158">Chromosome</keyword>
<keyword id="KW-0227">DNA damage</keyword>
<keyword id="KW-0234">DNA repair</keyword>
<keyword id="KW-0238">DNA-binding</keyword>
<keyword id="KW-0488">Methylation</keyword>
<keyword id="KW-0544">Nucleosome core</keyword>
<keyword id="KW-0539">Nucleus</keyword>
<keyword id="KW-0597">Phosphoprotein</keyword>
<keyword id="KW-1185">Reference proteome</keyword>
<accession>Q59VP2</accession>
<accession>A0A1D8PD77</accession>
<comment type="function">
    <text>Core component of nucleosome which plays a central role in DNA double strand break (DSB) repair. Nucleosomes wrap and compact DNA into chromatin, limiting DNA accessibility to the cellular machineries which require DNA as a template. Histones thereby play a central role in transcription regulation, DNA repair, DNA replication and chromosomal stability. DNA accessibility is regulated via a complex set of post-translational modifications of histones, also called histone code, and nucleosome remodeling.</text>
</comment>
<comment type="subunit">
    <text>The nucleosome is a histone octamer containing two molecules each of H2A, H2B, H3 and H4 assembled in one H3-H4 heterotetramer and two H2A-H2B heterodimers. The octamer wraps approximately 147 bp of DNA.</text>
</comment>
<comment type="subcellular location">
    <subcellularLocation>
        <location evidence="1">Nucleus</location>
    </subcellularLocation>
    <subcellularLocation>
        <location evidence="1">Chromosome</location>
    </subcellularLocation>
</comment>
<comment type="domain">
    <text>The [ST]-Q motif constitutes a recognition sequence for kinases from the PI3/PI4-kinase family.</text>
</comment>
<comment type="PTM">
    <text evidence="1">Phosphorylated to form H2AS128ph (gamma-H2A) in response to DNA double-strand breaks (DSBs) generated by exogenous genotoxic agents and by stalled replication forks. Phosphorylation is dependent on the DNA damage checkpoint kinases MEC1/ATR and TEL1/ATM, spreads on either side of a detected DSB site and may mark the surrounding chromatin for recruitment of proteins required for DNA damage signaling and repair. Gamma-H2A is removed from the DNA prior to the strand invasion-primer extension step of the repair process and subsequently dephosphorylated. Dephosphorylation is necessary for efficient recovery from the DNA damage checkpoint (By similarity).</text>
</comment>
<comment type="PTM">
    <text evidence="1">Acetylated by ESA1 to form H2AK4ac and H2AK7ac.</text>
</comment>
<comment type="miscellaneous">
    <text evidence="3">In contrast to vertebrates and insects, its C-terminus is not monoubiquitinated.</text>
</comment>
<comment type="similarity">
    <text evidence="3">Belongs to the histone H2A family.</text>
</comment>
<comment type="caution">
    <text evidence="3">To ensure consistency between histone entries, we follow the 'Brno' nomenclature for histone modifications, with positions referring to those used in the literature for the 'closest' model organism. Due to slight variations in histone sequences between organisms and to the presence of initiator methionine in UniProtKB/Swiss-Prot sequences, the actual positions of modified amino acids in the sequence generally differ. In this entry the following conventions are used: H2AK4ac = acetylated Lys-5; H2AK7ac = acetylated Lys-7; H2AS128ph = phosphorylated Ser-128.</text>
</comment>
<protein>
    <recommendedName>
        <fullName>Histone H2A.2</fullName>
    </recommendedName>
</protein>
<proteinExistence type="inferred from homology"/>
<reference key="1">
    <citation type="journal article" date="2004" name="Proc. Natl. Acad. Sci. U.S.A.">
        <title>The diploid genome sequence of Candida albicans.</title>
        <authorList>
            <person name="Jones T."/>
            <person name="Federspiel N.A."/>
            <person name="Chibana H."/>
            <person name="Dungan J."/>
            <person name="Kalman S."/>
            <person name="Magee B.B."/>
            <person name="Newport G."/>
            <person name="Thorstenson Y.R."/>
            <person name="Agabian N."/>
            <person name="Magee P.T."/>
            <person name="Davis R.W."/>
            <person name="Scherer S."/>
        </authorList>
    </citation>
    <scope>NUCLEOTIDE SEQUENCE [LARGE SCALE GENOMIC DNA]</scope>
    <source>
        <strain>SC5314 / ATCC MYA-2876</strain>
    </source>
</reference>
<reference key="2">
    <citation type="journal article" date="2007" name="Genome Biol.">
        <title>Assembly of the Candida albicans genome into sixteen supercontigs aligned on the eight chromosomes.</title>
        <authorList>
            <person name="van het Hoog M."/>
            <person name="Rast T.J."/>
            <person name="Martchenko M."/>
            <person name="Grindle S."/>
            <person name="Dignard D."/>
            <person name="Hogues H."/>
            <person name="Cuomo C."/>
            <person name="Berriman M."/>
            <person name="Scherer S."/>
            <person name="Magee B.B."/>
            <person name="Whiteway M."/>
            <person name="Chibana H."/>
            <person name="Nantel A."/>
            <person name="Magee P.T."/>
        </authorList>
    </citation>
    <scope>GENOME REANNOTATION</scope>
    <source>
        <strain>SC5314 / ATCC MYA-2876</strain>
    </source>
</reference>
<reference key="3">
    <citation type="journal article" date="2013" name="Genome Biol.">
        <title>Assembly of a phased diploid Candida albicans genome facilitates allele-specific measurements and provides a simple model for repeat and indel structure.</title>
        <authorList>
            <person name="Muzzey D."/>
            <person name="Schwartz K."/>
            <person name="Weissman J.S."/>
            <person name="Sherlock G."/>
        </authorList>
    </citation>
    <scope>NUCLEOTIDE SEQUENCE [LARGE SCALE GENOMIC DNA]</scope>
    <scope>GENOME REANNOTATION</scope>
    <source>
        <strain>SC5314 / ATCC MYA-2876</strain>
    </source>
</reference>
<feature type="initiator methionine" description="Removed" evidence="1">
    <location>
        <position position="1"/>
    </location>
</feature>
<feature type="chain" id="PRO_0000228726" description="Histone H2A.2">
    <location>
        <begin position="2"/>
        <end position="131"/>
    </location>
</feature>
<feature type="region of interest" description="Disordered" evidence="2">
    <location>
        <begin position="1"/>
        <end position="22"/>
    </location>
</feature>
<feature type="short sequence motif" description="[ST]-Q motif">
    <location>
        <begin position="128"/>
        <end position="129"/>
    </location>
</feature>
<feature type="modified residue" description="N-acetylserine" evidence="1">
    <location>
        <position position="2"/>
    </location>
</feature>
<feature type="modified residue" description="N6-acetyllysine" evidence="1">
    <location>
        <position position="5"/>
    </location>
</feature>
<feature type="modified residue" description="N6-acetyllysine" evidence="1">
    <location>
        <position position="7"/>
    </location>
</feature>
<feature type="modified residue" description="N5-methylglutamine" evidence="1">
    <location>
        <position position="105"/>
    </location>
</feature>
<feature type="modified residue" description="Phosphoserine" evidence="1">
    <location>
        <position position="128"/>
    </location>
</feature>
<dbReference type="EMBL" id="CP017623">
    <property type="protein sequence ID" value="AOW26092.1"/>
    <property type="molecule type" value="Genomic_DNA"/>
</dbReference>
<dbReference type="RefSeq" id="XP_713655.1">
    <property type="nucleotide sequence ID" value="XM_708562.1"/>
</dbReference>
<dbReference type="SMR" id="Q59VP2"/>
<dbReference type="FunCoup" id="Q59VP2">
    <property type="interactions" value="1173"/>
</dbReference>
<dbReference type="STRING" id="237561.Q59VP2"/>
<dbReference type="EnsemblFungi" id="C1_04170C_A-T">
    <property type="protein sequence ID" value="C1_04170C_A-T-p1"/>
    <property type="gene ID" value="C1_04170C_A"/>
</dbReference>
<dbReference type="GeneID" id="3644715"/>
<dbReference type="KEGG" id="cal:CAALFM_C104170CA"/>
<dbReference type="CGD" id="CAL0000200441">
    <property type="gene designation" value="HTA2"/>
</dbReference>
<dbReference type="VEuPathDB" id="FungiDB:C1_04170C_A"/>
<dbReference type="eggNOG" id="KOG1756">
    <property type="taxonomic scope" value="Eukaryota"/>
</dbReference>
<dbReference type="HOGENOM" id="CLU_062828_3_1_1"/>
<dbReference type="InParanoid" id="Q59VP2"/>
<dbReference type="OMA" id="ANEMFIN"/>
<dbReference type="OrthoDB" id="9421954at2759"/>
<dbReference type="PRO" id="PR:Q59VP2"/>
<dbReference type="Proteomes" id="UP000000559">
    <property type="component" value="Chromosome 1"/>
</dbReference>
<dbReference type="GO" id="GO:0000786">
    <property type="term" value="C:nucleosome"/>
    <property type="evidence" value="ECO:0000318"/>
    <property type="project" value="GO_Central"/>
</dbReference>
<dbReference type="GO" id="GO:0005634">
    <property type="term" value="C:nucleus"/>
    <property type="evidence" value="ECO:0000318"/>
    <property type="project" value="GO_Central"/>
</dbReference>
<dbReference type="GO" id="GO:0003677">
    <property type="term" value="F:DNA binding"/>
    <property type="evidence" value="ECO:0007669"/>
    <property type="project" value="UniProtKB-KW"/>
</dbReference>
<dbReference type="GO" id="GO:0046982">
    <property type="term" value="F:protein heterodimerization activity"/>
    <property type="evidence" value="ECO:0007669"/>
    <property type="project" value="InterPro"/>
</dbReference>
<dbReference type="GO" id="GO:0030527">
    <property type="term" value="F:structural constituent of chromatin"/>
    <property type="evidence" value="ECO:0000318"/>
    <property type="project" value="GO_Central"/>
</dbReference>
<dbReference type="GO" id="GO:0006281">
    <property type="term" value="P:DNA repair"/>
    <property type="evidence" value="ECO:0007669"/>
    <property type="project" value="UniProtKB-KW"/>
</dbReference>
<dbReference type="GO" id="GO:0031507">
    <property type="term" value="P:heterochromatin formation"/>
    <property type="evidence" value="ECO:0000318"/>
    <property type="project" value="GO_Central"/>
</dbReference>
<dbReference type="CDD" id="cd00074">
    <property type="entry name" value="HFD_H2A"/>
    <property type="match status" value="1"/>
</dbReference>
<dbReference type="FunFam" id="1.10.20.10:FF:000008">
    <property type="entry name" value="Histone H2A"/>
    <property type="match status" value="1"/>
</dbReference>
<dbReference type="Gene3D" id="1.10.20.10">
    <property type="entry name" value="Histone, subunit A"/>
    <property type="match status" value="1"/>
</dbReference>
<dbReference type="InterPro" id="IPR009072">
    <property type="entry name" value="Histone-fold"/>
</dbReference>
<dbReference type="InterPro" id="IPR002119">
    <property type="entry name" value="Histone_H2A"/>
</dbReference>
<dbReference type="InterPro" id="IPR007125">
    <property type="entry name" value="Histone_H2A/H2B/H3"/>
</dbReference>
<dbReference type="InterPro" id="IPR032454">
    <property type="entry name" value="Histone_H2A_C"/>
</dbReference>
<dbReference type="InterPro" id="IPR032458">
    <property type="entry name" value="Histone_H2A_CS"/>
</dbReference>
<dbReference type="PANTHER" id="PTHR23430">
    <property type="entry name" value="HISTONE H2A"/>
    <property type="match status" value="1"/>
</dbReference>
<dbReference type="Pfam" id="PF00125">
    <property type="entry name" value="Histone"/>
    <property type="match status" value="1"/>
</dbReference>
<dbReference type="Pfam" id="PF16211">
    <property type="entry name" value="Histone_H2A_C"/>
    <property type="match status" value="1"/>
</dbReference>
<dbReference type="PRINTS" id="PR00620">
    <property type="entry name" value="HISTONEH2A"/>
</dbReference>
<dbReference type="SMART" id="SM00414">
    <property type="entry name" value="H2A"/>
    <property type="match status" value="1"/>
</dbReference>
<dbReference type="SUPFAM" id="SSF47113">
    <property type="entry name" value="Histone-fold"/>
    <property type="match status" value="1"/>
</dbReference>
<dbReference type="PROSITE" id="PS00046">
    <property type="entry name" value="HISTONE_H2A"/>
    <property type="match status" value="1"/>
</dbReference>